<sequence length="121" mass="12374">MRCFERYRLHLNRLSLSNAMMRVISSCAPSLGGAMAWSISSCGPAAAQSAGGGTDPATMVNNICTFILGPFGQSLAVLGIVAIGISWMFGRRSLGLVAGVVGGIVIMFGASFLGQTLTGGS</sequence>
<geneLocation type="plasmid">
    <name>pTiA6</name>
</geneLocation>
<accession>P09776</accession>
<dbReference type="EMBL" id="J03216">
    <property type="protein sequence ID" value="AAA88646.1"/>
    <property type="molecule type" value="Genomic_DNA"/>
</dbReference>
<dbReference type="PIR" id="B28621">
    <property type="entry name" value="B2AGA6"/>
</dbReference>
<dbReference type="SMR" id="P09776"/>
<dbReference type="IntAct" id="P09776">
    <property type="interactions" value="1"/>
</dbReference>
<dbReference type="GO" id="GO:0009279">
    <property type="term" value="C:cell outer membrane"/>
    <property type="evidence" value="ECO:0007669"/>
    <property type="project" value="UniProtKB-SubCell"/>
</dbReference>
<dbReference type="InterPro" id="IPR007039">
    <property type="entry name" value="TrbC/VirB2"/>
</dbReference>
<dbReference type="NCBIfam" id="NF010431">
    <property type="entry name" value="PRK13857.1"/>
    <property type="match status" value="1"/>
</dbReference>
<dbReference type="Pfam" id="PF04956">
    <property type="entry name" value="TrbC"/>
    <property type="match status" value="1"/>
</dbReference>
<name>VIRB2_RHIRD</name>
<organism>
    <name type="scientific">Rhizobium radiobacter</name>
    <name type="common">Agrobacterium tumefaciens</name>
    <name type="synonym">Agrobacterium radiobacter</name>
    <dbReference type="NCBI Taxonomy" id="358"/>
    <lineage>
        <taxon>Bacteria</taxon>
        <taxon>Pseudomonadati</taxon>
        <taxon>Pseudomonadota</taxon>
        <taxon>Alphaproteobacteria</taxon>
        <taxon>Hyphomicrobiales</taxon>
        <taxon>Rhizobiaceae</taxon>
        <taxon>Rhizobium/Agrobacterium group</taxon>
        <taxon>Agrobacterium</taxon>
        <taxon>Agrobacterium tumefaciens complex</taxon>
    </lineage>
</organism>
<reference key="1">
    <citation type="journal article" date="1988" name="J. Biol. Chem.">
        <title>Characterization of the virB operon from an Agrobacterium tumefaciens Ti plasmid.</title>
        <authorList>
            <person name="Ward J.E."/>
            <person name="Akiyoshi D.E."/>
            <person name="Regier D."/>
            <person name="Datta A."/>
            <person name="Gordon M.P."/>
            <person name="Nester E.W."/>
        </authorList>
    </citation>
    <scope>NUCLEOTIDE SEQUENCE [GENOMIC DNA]</scope>
</reference>
<reference key="2">
    <citation type="journal article" date="2004" name="Plant Cell">
        <title>Plant proteins that interact with VirB2, the Agrobacterium tumefaciens pilin protein, mediate plant transformation.</title>
        <authorList>
            <person name="Hwang H.-H."/>
            <person name="Gelvin S.B."/>
        </authorList>
    </citation>
    <scope>INTERACTION WITH RTNLB1</scope>
    <source>
        <strain>A208</strain>
    </source>
</reference>
<evidence type="ECO:0000255" key="1"/>
<evidence type="ECO:0000269" key="2">
    <source>
    </source>
</evidence>
<evidence type="ECO:0000305" key="3"/>
<comment type="function">
    <text>VirB proteins are suggested to act at the bacterial surface and there play an important role in directing T-DNA transfer to plant cells.</text>
</comment>
<comment type="subunit">
    <text evidence="2">Interacts with host plant RTNLB1 protein.</text>
</comment>
<comment type="interaction">
    <interactant intactId="EBI-6509119">
        <id>P09776</id>
    </interactant>
    <interactant intactId="EBI-6509107">
        <id>P0A3W0</id>
        <label>virB4</label>
    </interactant>
    <organismsDiffer>false</organismsDiffer>
    <experiments>2</experiments>
</comment>
<comment type="subcellular location">
    <subcellularLocation>
        <location evidence="3">Cell outer membrane</location>
        <topology evidence="3">Multi-pass membrane protein</topology>
    </subcellularLocation>
</comment>
<comment type="similarity">
    <text evidence="3">Belongs to the virB2 family.</text>
</comment>
<protein>
    <recommendedName>
        <fullName>Protein virB2</fullName>
    </recommendedName>
</protein>
<proteinExistence type="evidence at protein level"/>
<gene>
    <name type="primary">virB2</name>
</gene>
<feature type="signal peptide" evidence="1">
    <location>
        <begin position="1"/>
        <end position="19"/>
    </location>
</feature>
<feature type="chain" id="PRO_0000022662" description="Protein virB2">
    <location>
        <begin position="20"/>
        <end position="121"/>
    </location>
</feature>
<feature type="transmembrane region" description="Helical" evidence="1">
    <location>
        <begin position="65"/>
        <end position="85"/>
    </location>
</feature>
<feature type="transmembrane region" description="Helical" evidence="1">
    <location>
        <begin position="94"/>
        <end position="114"/>
    </location>
</feature>
<keyword id="KW-0998">Cell outer membrane</keyword>
<keyword id="KW-0192">Crown gall tumor</keyword>
<keyword id="KW-0472">Membrane</keyword>
<keyword id="KW-0614">Plasmid</keyword>
<keyword id="KW-0732">Signal</keyword>
<keyword id="KW-0812">Transmembrane</keyword>
<keyword id="KW-1133">Transmembrane helix</keyword>